<gene>
    <name evidence="1" type="primary">bioD</name>
    <name type="ordered locus">LIC_11779</name>
</gene>
<sequence length="221" mass="24592">MAVFIGGTGTDVGKTFFSSLILGKYGESLGLKYFKPVQTGDDSDRITLMRLTGLHESYVLKNYYSLAFAGSPHYSSELEGTEIDTDELSRHLYSIRDEKIIIEGAGGLLVPLNRRMLTLEVIRQAEIPLILVAPTSLGAINQTLLSIEAIQNRNIDLKGIYFLGIPDKTTEDNIRTITEWSGVISLGSFFLNSNERISCECFQEECIPKFDLDESIKNILV</sequence>
<evidence type="ECO:0000255" key="1">
    <source>
        <dbReference type="HAMAP-Rule" id="MF_00336"/>
    </source>
</evidence>
<comment type="function">
    <text evidence="1">Catalyzes a mechanistically unusual reaction, the ATP-dependent insertion of CO2 between the N7 and N8 nitrogen atoms of 7,8-diaminopelargonic acid (DAPA, also called 7,8-diammoniononanoate) to form a ureido ring.</text>
</comment>
<comment type="catalytic activity">
    <reaction evidence="1">
        <text>(7R,8S)-7,8-diammoniononanoate + CO2 + ATP = (4R,5S)-dethiobiotin + ADP + phosphate + 3 H(+)</text>
        <dbReference type="Rhea" id="RHEA:15805"/>
        <dbReference type="ChEBI" id="CHEBI:15378"/>
        <dbReference type="ChEBI" id="CHEBI:16526"/>
        <dbReference type="ChEBI" id="CHEBI:30616"/>
        <dbReference type="ChEBI" id="CHEBI:43474"/>
        <dbReference type="ChEBI" id="CHEBI:149469"/>
        <dbReference type="ChEBI" id="CHEBI:149473"/>
        <dbReference type="ChEBI" id="CHEBI:456216"/>
        <dbReference type="EC" id="6.3.3.3"/>
    </reaction>
</comment>
<comment type="cofactor">
    <cofactor evidence="1">
        <name>Mg(2+)</name>
        <dbReference type="ChEBI" id="CHEBI:18420"/>
    </cofactor>
</comment>
<comment type="pathway">
    <text evidence="1">Cofactor biosynthesis; biotin biosynthesis; biotin from 7,8-diaminononanoate: step 1/2.</text>
</comment>
<comment type="subunit">
    <text evidence="1">Homodimer.</text>
</comment>
<comment type="subcellular location">
    <subcellularLocation>
        <location evidence="1">Cytoplasm</location>
    </subcellularLocation>
</comment>
<comment type="similarity">
    <text evidence="1">Belongs to the dethiobiotin synthetase family.</text>
</comment>
<reference key="1">
    <citation type="journal article" date="2004" name="J. Bacteriol.">
        <title>Comparative genomics of two Leptospira interrogans serovars reveals novel insights into physiology and pathogenesis.</title>
        <authorList>
            <person name="Nascimento A.L.T.O."/>
            <person name="Ko A.I."/>
            <person name="Martins E.A.L."/>
            <person name="Monteiro-Vitorello C.B."/>
            <person name="Ho P.L."/>
            <person name="Haake D.A."/>
            <person name="Verjovski-Almeida S."/>
            <person name="Hartskeerl R.A."/>
            <person name="Marques M.V."/>
            <person name="Oliveira M.C."/>
            <person name="Menck C.F.M."/>
            <person name="Leite L.C.C."/>
            <person name="Carrer H."/>
            <person name="Coutinho L.L."/>
            <person name="Degrave W.M."/>
            <person name="Dellagostin O.A."/>
            <person name="El-Dorry H."/>
            <person name="Ferro E.S."/>
            <person name="Ferro M.I.T."/>
            <person name="Furlan L.R."/>
            <person name="Gamberini M."/>
            <person name="Giglioti E.A."/>
            <person name="Goes-Neto A."/>
            <person name="Goldman G.H."/>
            <person name="Goldman M.H.S."/>
            <person name="Harakava R."/>
            <person name="Jeronimo S.M.B."/>
            <person name="Junqueira-de-Azevedo I.L.M."/>
            <person name="Kimura E.T."/>
            <person name="Kuramae E.E."/>
            <person name="Lemos E.G.M."/>
            <person name="Lemos M.V.F."/>
            <person name="Marino C.L."/>
            <person name="Nunes L.R."/>
            <person name="de Oliveira R.C."/>
            <person name="Pereira G.G."/>
            <person name="Reis M.S."/>
            <person name="Schriefer A."/>
            <person name="Siqueira W.J."/>
            <person name="Sommer P."/>
            <person name="Tsai S.M."/>
            <person name="Simpson A.J.G."/>
            <person name="Ferro J.A."/>
            <person name="Camargo L.E.A."/>
            <person name="Kitajima J.P."/>
            <person name="Setubal J.C."/>
            <person name="Van Sluys M.A."/>
        </authorList>
    </citation>
    <scope>NUCLEOTIDE SEQUENCE [LARGE SCALE GENOMIC DNA]</scope>
    <source>
        <strain>Fiocruz L1-130</strain>
    </source>
</reference>
<keyword id="KW-0067">ATP-binding</keyword>
<keyword id="KW-0093">Biotin biosynthesis</keyword>
<keyword id="KW-0963">Cytoplasm</keyword>
<keyword id="KW-0436">Ligase</keyword>
<keyword id="KW-0460">Magnesium</keyword>
<keyword id="KW-0479">Metal-binding</keyword>
<keyword id="KW-0547">Nucleotide-binding</keyword>
<dbReference type="EC" id="6.3.3.3" evidence="1"/>
<dbReference type="EMBL" id="AE016823">
    <property type="protein sequence ID" value="AAS70368.1"/>
    <property type="molecule type" value="Genomic_DNA"/>
</dbReference>
<dbReference type="RefSeq" id="WP_000257883.1">
    <property type="nucleotide sequence ID" value="NC_005823.1"/>
</dbReference>
<dbReference type="SMR" id="Q72RG6"/>
<dbReference type="GeneID" id="61141677"/>
<dbReference type="KEGG" id="lic:LIC_11779"/>
<dbReference type="HOGENOM" id="CLU_072551_2_0_12"/>
<dbReference type="UniPathway" id="UPA00078">
    <property type="reaction ID" value="UER00161"/>
</dbReference>
<dbReference type="Proteomes" id="UP000007037">
    <property type="component" value="Chromosome I"/>
</dbReference>
<dbReference type="GO" id="GO:0005829">
    <property type="term" value="C:cytosol"/>
    <property type="evidence" value="ECO:0007669"/>
    <property type="project" value="TreeGrafter"/>
</dbReference>
<dbReference type="GO" id="GO:0005524">
    <property type="term" value="F:ATP binding"/>
    <property type="evidence" value="ECO:0007669"/>
    <property type="project" value="UniProtKB-UniRule"/>
</dbReference>
<dbReference type="GO" id="GO:0004141">
    <property type="term" value="F:dethiobiotin synthase activity"/>
    <property type="evidence" value="ECO:0007669"/>
    <property type="project" value="UniProtKB-UniRule"/>
</dbReference>
<dbReference type="GO" id="GO:0000287">
    <property type="term" value="F:magnesium ion binding"/>
    <property type="evidence" value="ECO:0007669"/>
    <property type="project" value="UniProtKB-UniRule"/>
</dbReference>
<dbReference type="GO" id="GO:0009102">
    <property type="term" value="P:biotin biosynthetic process"/>
    <property type="evidence" value="ECO:0007669"/>
    <property type="project" value="UniProtKB-UniRule"/>
</dbReference>
<dbReference type="CDD" id="cd03109">
    <property type="entry name" value="DTBS"/>
    <property type="match status" value="1"/>
</dbReference>
<dbReference type="Gene3D" id="3.40.50.300">
    <property type="entry name" value="P-loop containing nucleotide triphosphate hydrolases"/>
    <property type="match status" value="1"/>
</dbReference>
<dbReference type="HAMAP" id="MF_00336">
    <property type="entry name" value="BioD"/>
    <property type="match status" value="1"/>
</dbReference>
<dbReference type="InterPro" id="IPR004472">
    <property type="entry name" value="DTB_synth_BioD"/>
</dbReference>
<dbReference type="InterPro" id="IPR027417">
    <property type="entry name" value="P-loop_NTPase"/>
</dbReference>
<dbReference type="NCBIfam" id="TIGR00347">
    <property type="entry name" value="bioD"/>
    <property type="match status" value="1"/>
</dbReference>
<dbReference type="PANTHER" id="PTHR43210:SF2">
    <property type="entry name" value="ATP-DEPENDENT DETHIOBIOTIN SYNTHETASE BIOD 2"/>
    <property type="match status" value="1"/>
</dbReference>
<dbReference type="PANTHER" id="PTHR43210">
    <property type="entry name" value="DETHIOBIOTIN SYNTHETASE"/>
    <property type="match status" value="1"/>
</dbReference>
<dbReference type="Pfam" id="PF13500">
    <property type="entry name" value="AAA_26"/>
    <property type="match status" value="1"/>
</dbReference>
<dbReference type="PIRSF" id="PIRSF006755">
    <property type="entry name" value="DTB_synth"/>
    <property type="match status" value="1"/>
</dbReference>
<dbReference type="SUPFAM" id="SSF52540">
    <property type="entry name" value="P-loop containing nucleoside triphosphate hydrolases"/>
    <property type="match status" value="1"/>
</dbReference>
<name>BIOD_LEPIC</name>
<proteinExistence type="inferred from homology"/>
<feature type="chain" id="PRO_0000187973" description="ATP-dependent dethiobiotin synthetase BioD">
    <location>
        <begin position="1"/>
        <end position="221"/>
    </location>
</feature>
<feature type="active site" evidence="1">
    <location>
        <position position="35"/>
    </location>
</feature>
<feature type="binding site" evidence="1">
    <location>
        <begin position="11"/>
        <end position="16"/>
    </location>
    <ligand>
        <name>ATP</name>
        <dbReference type="ChEBI" id="CHEBI:30616"/>
    </ligand>
</feature>
<feature type="binding site" evidence="1">
    <location>
        <position position="15"/>
    </location>
    <ligand>
        <name>Mg(2+)</name>
        <dbReference type="ChEBI" id="CHEBI:18420"/>
    </ligand>
</feature>
<feature type="binding site" evidence="1">
    <location>
        <position position="39"/>
    </location>
    <ligand>
        <name>substrate</name>
    </ligand>
</feature>
<feature type="binding site" evidence="1">
    <location>
        <position position="44"/>
    </location>
    <ligand>
        <name>ATP</name>
        <dbReference type="ChEBI" id="CHEBI:30616"/>
    </ligand>
</feature>
<feature type="binding site" evidence="1">
    <location>
        <position position="44"/>
    </location>
    <ligand>
        <name>Mg(2+)</name>
        <dbReference type="ChEBI" id="CHEBI:18420"/>
    </ligand>
</feature>
<feature type="binding site" evidence="1">
    <location>
        <begin position="103"/>
        <end position="106"/>
    </location>
    <ligand>
        <name>ATP</name>
        <dbReference type="ChEBI" id="CHEBI:30616"/>
    </ligand>
</feature>
<feature type="binding site" evidence="1">
    <location>
        <position position="103"/>
    </location>
    <ligand>
        <name>Mg(2+)</name>
        <dbReference type="ChEBI" id="CHEBI:18420"/>
    </ligand>
</feature>
<protein>
    <recommendedName>
        <fullName evidence="1">ATP-dependent dethiobiotin synthetase BioD</fullName>
        <ecNumber evidence="1">6.3.3.3</ecNumber>
    </recommendedName>
    <alternativeName>
        <fullName evidence="1">DTB synthetase</fullName>
        <shortName evidence="1">DTBS</shortName>
    </alternativeName>
    <alternativeName>
        <fullName evidence="1">Dethiobiotin synthase</fullName>
    </alternativeName>
</protein>
<accession>Q72RG6</accession>
<organism>
    <name type="scientific">Leptospira interrogans serogroup Icterohaemorrhagiae serovar copenhageni (strain Fiocruz L1-130)</name>
    <dbReference type="NCBI Taxonomy" id="267671"/>
    <lineage>
        <taxon>Bacteria</taxon>
        <taxon>Pseudomonadati</taxon>
        <taxon>Spirochaetota</taxon>
        <taxon>Spirochaetia</taxon>
        <taxon>Leptospirales</taxon>
        <taxon>Leptospiraceae</taxon>
        <taxon>Leptospira</taxon>
    </lineage>
</organism>